<keyword id="KW-0040">ANK repeat</keyword>
<keyword id="KW-0067">ATP-binding</keyword>
<keyword id="KW-0333">Golgi apparatus</keyword>
<keyword id="KW-0342">GTP-binding</keyword>
<keyword id="KW-0418">Kinase</keyword>
<keyword id="KW-0433">Leucine-rich repeat</keyword>
<keyword id="KW-0460">Magnesium</keyword>
<keyword id="KW-0464">Manganese</keyword>
<keyword id="KW-0479">Metal-binding</keyword>
<keyword id="KW-0547">Nucleotide-binding</keyword>
<keyword id="KW-1185">Reference proteome</keyword>
<keyword id="KW-0677">Repeat</keyword>
<keyword id="KW-0723">Serine/threonine-protein kinase</keyword>
<keyword id="KW-0346">Stress response</keyword>
<keyword id="KW-0808">Transferase</keyword>
<sequence>MDLSSGGPSSSSDVASELDNSDAMQLVRQAVLFENVELLADLFKVNPWVWNRVDRHGRTPLMLAAHNGKLDSLRTILMLSPNSLNLVNDRGKTALHMAAESGETSIVLELVELGSDPMKSDNEGHCALELAQMAGHNEVAAKLIDAIQKESEDLNEAHTMIISACISGSADVVYEISRRFMEKKQSREILFNGRNEEDETALLIACTNGHIEIVRHLLQFEEHLLQSHVSKDTVIHAAVSSQNVEVLQLCLEKFPQLVKSTNNEGSTCLHWAARCGSSECVSTILNFPFPSEFIIEIDTVGAPAYQLALDVNEVDGECRTAMYLAVAEGHLEVVKAMTDFKCTSIDGRQRCPFQLDVYCTRGRTPFMLAAFNQNLPLMTLLLDAGADVNLPLAVLDTEYSVEEGRCIGSGALVEAVRSDGLHIVHFLLDRGALDTDNKALRLAAQGKNEKLIRVFLVRLVFADPEYKINKKNIDVGQIQVGQSLLPSSLCPSKAAQLNWNSANLEQLQSDWFVAAALHVNPRLRTTRLSLAAITRVDLSDNRLNTFPSILFQMPSLRSLNLADNSIRKIEIPTYYISSTSLEILNLRNNQLECIAIQFLSSLPQLQQLDVSKNELSQLPEYIWLCPALKELNASYNRLSTLPMVARASRGERPRLNNSNNNFNTQSPTQESNPIVVDDPPNVTSNPLRRQNVWQASINLSKVDDDSLFPDFPVTSSNTLTTINLSFNKFHTFPFCLACTCPRLLILNMSNNSMTSLPPMACVPAHLRTLDLSYNKIQESFIEASPLHVVCHAVPPTTSNGSMLPKRRNSPARQHRSRSKSAVRSQRSLSVSRHHALIDPQKEEESCVHKRHDSLEWLKTLQLAGNRLRSISVTNAASKVLLPALNVMDISDNKLLQAPPDVARLTLLSMLNLSGNTAIKELPPDYGMLSRLWSLSLKGCSLKEPLESMVNVENCKTVEIVAYLKTILEESKTYHHLRLMILGSDGVGKSVIWDALCKEAVQKRQPIHSETGVIRQAEWKFEAKRSKGDKNLGPVGFSVIDFGGQREYHSTHQYFLSKRSLNLVLWKITDGDEALAQLDTWLVNIHARAPNSTVILVGTNLDQVASNSSKFGPGYIDIMEQKVRTRYMVADADKSGLPRIVDVILINSTSRNDVKALLNTIYRTAWEVRMGKERAMEQQIPSSYIALMKVTKELGVEFRKEGQPAVMTVEAYRERVKKRMISKFGRPFRDDIEFYAACTFLHDCGELVRFEDATLRDLIFVDPLWLAEFLTSVVILRSPNLPAGLLSTDAINPHTRSFKSGALLMLKTQLLDLLHKFELALATQPRQLLIPSLLPDEYRLRSDFLASAVKIRMKMSQWNVRCPSPAGSPTKSPLRRTSPTDQNGVGSEDVMLQFTYDDDQLLRRIYALAYIPSGFWSRLVTRIVGDKNVCAAIESIFMTTSADRAKIADIATKHAKAEWVVWQTGIELHVKGHSLFTLKQFLPLAEVRDIDYSAIDMRAKDEQKRWRTWNQPSHRPIVEMVVNSLSISAASQHGRKLSMKTDVEGRSRLLAMISDLLDTLLEDWYPALGTRFVHSSEGDLLVSRYVLCPQCVRDAERNGSRSRTSSSASHRRSQDDGELPITSSSHMKGSRTTGDISKCRGGVVHCFVIEECMLAGREYNWVECPSHGGLHMRELAPDTVFADIENALTIHPDQLKRSRMLGRGAFGFVFRATVRQPNGELCEVAQKMLEPVDPGPGGRPSALAAYKAAADKWKRDSMEFACRAYCTSRQELSLLSRMKHPNVIGLVGVCTFPLSLVVELAPLGALNQLLGSHRKAGTKLSLGVIKESAVQVARALEYLHSAHIIYRDLKSENVLGWRFPAPFSPQTDVLLKLGDYGISRSVLPSGGAKGFGGTEGFMAPEIVRFNGEEEYTQKVDCFSFGMFLYELLTLKFPFESEEHVKERMLDGARPVLLPHELLLPTPMLDLLVHCWSAHPESRPSSSQLVGFCAAPEFTHLLDVCELGEALPPTQLMAVGITDEIDDPDDFEAQLWLSGREMVVMGCTQYGFVDQKSIELPHRGKYVSKVRDSVWSCDECGQVTVYGISLHETGHLQLPSLNGTLICAPELISNDVLILISDKQIVLLKLSESNSVSHLGTIDSPYEIRTATFLGNGSTRQIWAGHSEGRISIHHIASNDSFSFSSSLYLPDDKCIVRQLVGSKDAQKVWIALEKSSKVQMVEVEKRQVTGSLDIRKVMPGSETIHTIDMEMASQNYVTCIGLLERNDGDQLYIGTSKGLLVIAHATTLQPLSACRPFEGDITSICILEEPSREEENTRGKATTLSTASSESGLGWVRERVSETVDRFRSSPATVETQGAALVVCIGRQFRSLSHRFVAEEKLADVYSIAVWRTEEWAL</sequence>
<gene>
    <name type="primary">lrk-1</name>
    <name type="ORF">T27C10.6</name>
</gene>
<evidence type="ECO:0000250" key="1">
    <source>
        <dbReference type="UniProtKB" id="P28523"/>
    </source>
</evidence>
<evidence type="ECO:0000250" key="2">
    <source>
        <dbReference type="UniProtKB" id="Q38SD2"/>
    </source>
</evidence>
<evidence type="ECO:0000255" key="3"/>
<evidence type="ECO:0000255" key="4">
    <source>
        <dbReference type="PROSITE-ProRule" id="PRU00159"/>
    </source>
</evidence>
<evidence type="ECO:0000255" key="5">
    <source>
        <dbReference type="PROSITE-ProRule" id="PRU00758"/>
    </source>
</evidence>
<evidence type="ECO:0000256" key="6">
    <source>
        <dbReference type="SAM" id="MobiDB-lite"/>
    </source>
</evidence>
<evidence type="ECO:0000269" key="7">
    <source>
    </source>
</evidence>
<evidence type="ECO:0000269" key="8">
    <source>
    </source>
</evidence>
<evidence type="ECO:0000305" key="9"/>
<evidence type="ECO:0000312" key="10">
    <source>
        <dbReference type="EMBL" id="BAF48647.1"/>
    </source>
</evidence>
<proteinExistence type="evidence at protein level"/>
<dbReference type="EC" id="2.7.11.1"/>
<dbReference type="EMBL" id="AB297384">
    <property type="protein sequence ID" value="BAF48647.1"/>
    <property type="molecule type" value="mRNA"/>
</dbReference>
<dbReference type="EMBL" id="FO081425">
    <property type="protein sequence ID" value="CCD71547.1"/>
    <property type="molecule type" value="Genomic_DNA"/>
</dbReference>
<dbReference type="RefSeq" id="NP_492839.4">
    <property type="nucleotide sequence ID" value="NM_060438.6"/>
</dbReference>
<dbReference type="SMR" id="Q9TZM3"/>
<dbReference type="BioGRID" id="38404">
    <property type="interactions" value="2"/>
</dbReference>
<dbReference type="FunCoup" id="Q9TZM3">
    <property type="interactions" value="1883"/>
</dbReference>
<dbReference type="STRING" id="6239.T27C10.6.1"/>
<dbReference type="PaxDb" id="6239-T27C10.6"/>
<dbReference type="PeptideAtlas" id="Q9TZM3"/>
<dbReference type="EnsemblMetazoa" id="T27C10.6.1">
    <property type="protein sequence ID" value="T27C10.6.1"/>
    <property type="gene ID" value="WBGene00003068"/>
</dbReference>
<dbReference type="GeneID" id="172995"/>
<dbReference type="KEGG" id="cel:CELE_T27C10.6"/>
<dbReference type="UCSC" id="T27C10.6">
    <property type="organism name" value="c. elegans"/>
</dbReference>
<dbReference type="AGR" id="WB:WBGene00003068"/>
<dbReference type="CTD" id="172995"/>
<dbReference type="WormBase" id="T27C10.6">
    <property type="protein sequence ID" value="CE41939"/>
    <property type="gene ID" value="WBGene00003068"/>
    <property type="gene designation" value="lrk-1"/>
</dbReference>
<dbReference type="eggNOG" id="KOG0192">
    <property type="taxonomic scope" value="Eukaryota"/>
</dbReference>
<dbReference type="eggNOG" id="KOG0504">
    <property type="taxonomic scope" value="Eukaryota"/>
</dbReference>
<dbReference type="eggNOG" id="KOG0619">
    <property type="taxonomic scope" value="Eukaryota"/>
</dbReference>
<dbReference type="GeneTree" id="ENSGT00940000165193"/>
<dbReference type="HOGENOM" id="CLU_000987_0_0_1"/>
<dbReference type="InParanoid" id="Q9TZM3"/>
<dbReference type="OMA" id="NSQDSWG"/>
<dbReference type="OrthoDB" id="10252328at2759"/>
<dbReference type="PhylomeDB" id="Q9TZM3"/>
<dbReference type="PRO" id="PR:Q9TZM3"/>
<dbReference type="Proteomes" id="UP000001940">
    <property type="component" value="Chromosome I"/>
</dbReference>
<dbReference type="Bgee" id="WBGene00003068">
    <property type="expression patterns" value="Expressed in pharyngeal muscle cell (C elegans) and 3 other cell types or tissues"/>
</dbReference>
<dbReference type="GO" id="GO:0005737">
    <property type="term" value="C:cytoplasm"/>
    <property type="evidence" value="ECO:0000314"/>
    <property type="project" value="WormBase"/>
</dbReference>
<dbReference type="GO" id="GO:0005794">
    <property type="term" value="C:Golgi apparatus"/>
    <property type="evidence" value="ECO:0000314"/>
    <property type="project" value="WormBase"/>
</dbReference>
<dbReference type="GO" id="GO:0043025">
    <property type="term" value="C:neuronal cell body"/>
    <property type="evidence" value="ECO:0000314"/>
    <property type="project" value="WormBase"/>
</dbReference>
<dbReference type="GO" id="GO:0005524">
    <property type="term" value="F:ATP binding"/>
    <property type="evidence" value="ECO:0007669"/>
    <property type="project" value="UniProtKB-KW"/>
</dbReference>
<dbReference type="GO" id="GO:0005525">
    <property type="term" value="F:GTP binding"/>
    <property type="evidence" value="ECO:0007669"/>
    <property type="project" value="UniProtKB-KW"/>
</dbReference>
<dbReference type="GO" id="GO:0046872">
    <property type="term" value="F:metal ion binding"/>
    <property type="evidence" value="ECO:0007669"/>
    <property type="project" value="UniProtKB-KW"/>
</dbReference>
<dbReference type="GO" id="GO:0106310">
    <property type="term" value="F:protein serine kinase activity"/>
    <property type="evidence" value="ECO:0007669"/>
    <property type="project" value="RHEA"/>
</dbReference>
<dbReference type="GO" id="GO:0004674">
    <property type="term" value="F:protein serine/threonine kinase activity"/>
    <property type="evidence" value="ECO:0007669"/>
    <property type="project" value="UniProtKB-KW"/>
</dbReference>
<dbReference type="GO" id="GO:0048846">
    <property type="term" value="P:axon extension involved in axon guidance"/>
    <property type="evidence" value="ECO:0000316"/>
    <property type="project" value="WormBase"/>
</dbReference>
<dbReference type="GO" id="GO:1902236">
    <property type="term" value="P:negative regulation of endoplasmic reticulum stress-induced intrinsic apoptotic signaling pathway"/>
    <property type="evidence" value="ECO:0000315"/>
    <property type="project" value="ParkinsonsUK-UCL"/>
</dbReference>
<dbReference type="GO" id="GO:0008104">
    <property type="term" value="P:protein localization"/>
    <property type="evidence" value="ECO:0000315"/>
    <property type="project" value="WormBase"/>
</dbReference>
<dbReference type="GO" id="GO:0034976">
    <property type="term" value="P:response to endoplasmic reticulum stress"/>
    <property type="evidence" value="ECO:0000315"/>
    <property type="project" value="WormBase"/>
</dbReference>
<dbReference type="GO" id="GO:0006979">
    <property type="term" value="P:response to oxidative stress"/>
    <property type="evidence" value="ECO:0000316"/>
    <property type="project" value="WormBase"/>
</dbReference>
<dbReference type="GO" id="GO:0048489">
    <property type="term" value="P:synaptic vesicle transport"/>
    <property type="evidence" value="ECO:0000315"/>
    <property type="project" value="WormBase"/>
</dbReference>
<dbReference type="FunFam" id="3.80.10.10:FF:000484">
    <property type="entry name" value="Leucine-rich repeat kinase, isoform C"/>
    <property type="match status" value="1"/>
</dbReference>
<dbReference type="FunFam" id="1.10.510.10:FF:001242">
    <property type="entry name" value="Leucine-rich repeat serine/threonine-protein kinase 1"/>
    <property type="match status" value="1"/>
</dbReference>
<dbReference type="FunFam" id="3.30.200.20:FF:000803">
    <property type="entry name" value="Probable serine/threonine-protein kinase roco4"/>
    <property type="match status" value="1"/>
</dbReference>
<dbReference type="FunFam" id="3.30.70.1390:FF:000005">
    <property type="entry name" value="Probable serine/threonine-protein kinase roco4"/>
    <property type="match status" value="1"/>
</dbReference>
<dbReference type="Gene3D" id="1.25.40.20">
    <property type="entry name" value="Ankyrin repeat-containing domain"/>
    <property type="match status" value="3"/>
</dbReference>
<dbReference type="Gene3D" id="3.40.50.300">
    <property type="entry name" value="P-loop containing nucleotide triphosphate hydrolases"/>
    <property type="match status" value="1"/>
</dbReference>
<dbReference type="Gene3D" id="3.30.200.20">
    <property type="entry name" value="Phosphorylase Kinase, domain 1"/>
    <property type="match status" value="1"/>
</dbReference>
<dbReference type="Gene3D" id="3.80.10.10">
    <property type="entry name" value="Ribonuclease Inhibitor"/>
    <property type="match status" value="3"/>
</dbReference>
<dbReference type="Gene3D" id="3.30.70.1390">
    <property type="entry name" value="ROC domain from the Parkinson's disease-associated leucine-rich repeat kinase 2"/>
    <property type="match status" value="1"/>
</dbReference>
<dbReference type="Gene3D" id="1.10.510.10">
    <property type="entry name" value="Transferase(Phosphotransferase) domain 1"/>
    <property type="match status" value="1"/>
</dbReference>
<dbReference type="InterPro" id="IPR002110">
    <property type="entry name" value="Ankyrin_rpt"/>
</dbReference>
<dbReference type="InterPro" id="IPR036770">
    <property type="entry name" value="Ankyrin_rpt-contain_sf"/>
</dbReference>
<dbReference type="InterPro" id="IPR032171">
    <property type="entry name" value="COR-A"/>
</dbReference>
<dbReference type="InterPro" id="IPR011009">
    <property type="entry name" value="Kinase-like_dom_sf"/>
</dbReference>
<dbReference type="InterPro" id="IPR001611">
    <property type="entry name" value="Leu-rich_rpt"/>
</dbReference>
<dbReference type="InterPro" id="IPR003591">
    <property type="entry name" value="Leu-rich_rpt_typical-subtyp"/>
</dbReference>
<dbReference type="InterPro" id="IPR032675">
    <property type="entry name" value="LRR_dom_sf"/>
</dbReference>
<dbReference type="InterPro" id="IPR027417">
    <property type="entry name" value="P-loop_NTPase"/>
</dbReference>
<dbReference type="InterPro" id="IPR000719">
    <property type="entry name" value="Prot_kinase_dom"/>
</dbReference>
<dbReference type="InterPro" id="IPR020859">
    <property type="entry name" value="ROC"/>
</dbReference>
<dbReference type="InterPro" id="IPR036322">
    <property type="entry name" value="WD40_repeat_dom_sf"/>
</dbReference>
<dbReference type="PANTHER" id="PTHR24198">
    <property type="entry name" value="ANKYRIN REPEAT AND PROTEIN KINASE DOMAIN-CONTAINING PROTEIN"/>
    <property type="match status" value="1"/>
</dbReference>
<dbReference type="PANTHER" id="PTHR24198:SF169">
    <property type="entry name" value="NON-SPECIFIC SERINE_THREONINE PROTEIN KINASE"/>
    <property type="match status" value="1"/>
</dbReference>
<dbReference type="Pfam" id="PF12796">
    <property type="entry name" value="Ank_2"/>
    <property type="match status" value="3"/>
</dbReference>
<dbReference type="Pfam" id="PF16095">
    <property type="entry name" value="COR-A"/>
    <property type="match status" value="1"/>
</dbReference>
<dbReference type="Pfam" id="PF25497">
    <property type="entry name" value="COR-B"/>
    <property type="match status" value="1"/>
</dbReference>
<dbReference type="Pfam" id="PF13855">
    <property type="entry name" value="LRR_8"/>
    <property type="match status" value="1"/>
</dbReference>
<dbReference type="Pfam" id="PF00069">
    <property type="entry name" value="Pkinase"/>
    <property type="match status" value="1"/>
</dbReference>
<dbReference type="Pfam" id="PF08477">
    <property type="entry name" value="Roc"/>
    <property type="match status" value="1"/>
</dbReference>
<dbReference type="PRINTS" id="PR01415">
    <property type="entry name" value="ANKYRIN"/>
</dbReference>
<dbReference type="SMART" id="SM00248">
    <property type="entry name" value="ANK"/>
    <property type="match status" value="8"/>
</dbReference>
<dbReference type="SMART" id="SM00364">
    <property type="entry name" value="LRR_BAC"/>
    <property type="match status" value="8"/>
</dbReference>
<dbReference type="SMART" id="SM00369">
    <property type="entry name" value="LRR_TYP"/>
    <property type="match status" value="7"/>
</dbReference>
<dbReference type="SMART" id="SM00220">
    <property type="entry name" value="S_TKc"/>
    <property type="match status" value="1"/>
</dbReference>
<dbReference type="SUPFAM" id="SSF48403">
    <property type="entry name" value="Ankyrin repeat"/>
    <property type="match status" value="2"/>
</dbReference>
<dbReference type="SUPFAM" id="SSF52058">
    <property type="entry name" value="L domain-like"/>
    <property type="match status" value="1"/>
</dbReference>
<dbReference type="SUPFAM" id="SSF52540">
    <property type="entry name" value="P-loop containing nucleoside triphosphate hydrolases"/>
    <property type="match status" value="1"/>
</dbReference>
<dbReference type="SUPFAM" id="SSF56112">
    <property type="entry name" value="Protein kinase-like (PK-like)"/>
    <property type="match status" value="1"/>
</dbReference>
<dbReference type="SUPFAM" id="SSF50978">
    <property type="entry name" value="WD40 repeat-like"/>
    <property type="match status" value="1"/>
</dbReference>
<dbReference type="PROSITE" id="PS50297">
    <property type="entry name" value="ANK_REP_REGION"/>
    <property type="match status" value="1"/>
</dbReference>
<dbReference type="PROSITE" id="PS50088">
    <property type="entry name" value="ANK_REPEAT"/>
    <property type="match status" value="3"/>
</dbReference>
<dbReference type="PROSITE" id="PS51450">
    <property type="entry name" value="LRR"/>
    <property type="match status" value="10"/>
</dbReference>
<dbReference type="PROSITE" id="PS50011">
    <property type="entry name" value="PROTEIN_KINASE_DOM"/>
    <property type="match status" value="1"/>
</dbReference>
<dbReference type="PROSITE" id="PS51424">
    <property type="entry name" value="ROC"/>
    <property type="match status" value="1"/>
</dbReference>
<comment type="function">
    <text evidence="7 8">Determines polarized sorting of synaptic vesicle (SV) proteins to the axons by excluding SV proteins from the dendrite-specific transport machinery in the Golgi. Role in stress response. Appears to antagonize the effects of pink-1 both in the regulation of axon guidance and stress response.</text>
</comment>
<comment type="catalytic activity">
    <reaction evidence="2">
        <text>L-seryl-[protein] + ATP = O-phospho-L-seryl-[protein] + ADP + H(+)</text>
        <dbReference type="Rhea" id="RHEA:17989"/>
        <dbReference type="Rhea" id="RHEA-COMP:9863"/>
        <dbReference type="Rhea" id="RHEA-COMP:11604"/>
        <dbReference type="ChEBI" id="CHEBI:15378"/>
        <dbReference type="ChEBI" id="CHEBI:29999"/>
        <dbReference type="ChEBI" id="CHEBI:30616"/>
        <dbReference type="ChEBI" id="CHEBI:83421"/>
        <dbReference type="ChEBI" id="CHEBI:456216"/>
        <dbReference type="EC" id="2.7.11.1"/>
    </reaction>
</comment>
<comment type="catalytic activity">
    <reaction evidence="2">
        <text>L-threonyl-[protein] + ATP = O-phospho-L-threonyl-[protein] + ADP + H(+)</text>
        <dbReference type="Rhea" id="RHEA:46608"/>
        <dbReference type="Rhea" id="RHEA-COMP:11060"/>
        <dbReference type="Rhea" id="RHEA-COMP:11605"/>
        <dbReference type="ChEBI" id="CHEBI:15378"/>
        <dbReference type="ChEBI" id="CHEBI:30013"/>
        <dbReference type="ChEBI" id="CHEBI:30616"/>
        <dbReference type="ChEBI" id="CHEBI:61977"/>
        <dbReference type="ChEBI" id="CHEBI:456216"/>
        <dbReference type="EC" id="2.7.11.1"/>
    </reaction>
</comment>
<comment type="cofactor">
    <cofactor evidence="2">
        <name>Mg(2+)</name>
        <dbReference type="ChEBI" id="CHEBI:18420"/>
    </cofactor>
    <cofactor evidence="2">
        <name>Mn(2+)</name>
        <dbReference type="ChEBI" id="CHEBI:29035"/>
    </cofactor>
</comment>
<comment type="subcellular location">
    <subcellularLocation>
        <location evidence="7">Golgi apparatus</location>
    </subcellularLocation>
</comment>
<comment type="tissue specificity">
    <text evidence="7 8">Expressed in cell bodies, but not in dendritic or axonal processes, of adult head neurons. Also present in non-neuronal tissues, such as the body wall musculature and the epithelial cells of the nematode vulva.</text>
</comment>
<comment type="similarity">
    <text evidence="2">Belongs to the protein kinase superfamily. TKL Ser/Thr protein kinase family. ROCO subfamily.</text>
</comment>
<name>LRK1_CAEEL</name>
<reference evidence="9 10" key="1">
    <citation type="journal article" date="2007" name="Curr. Biol.">
        <title>LRK-1, a C. elegans PARK8-related kinase, regulates axonal-dendritic polarity of SV proteins.</title>
        <authorList>
            <person name="Sakaguchi-Nakashima A."/>
            <person name="Meir J.Y."/>
            <person name="Jin Y."/>
            <person name="Matsumoto K."/>
            <person name="Hisamoto N."/>
        </authorList>
    </citation>
    <scope>NUCLEOTIDE SEQUENCE [MRNA]</scope>
    <scope>SUBCELLULAR LOCATION</scope>
    <scope>TISSUE SPECIFICITY</scope>
    <scope>MUTAGENESIS OF LYS-1726 AND ILE-1877</scope>
</reference>
<reference key="2">
    <citation type="journal article" date="1998" name="Science">
        <title>Genome sequence of the nematode C. elegans: a platform for investigating biology.</title>
        <authorList>
            <consortium name="The C. elegans sequencing consortium"/>
        </authorList>
    </citation>
    <scope>NUCLEOTIDE SEQUENCE [LARGE SCALE GENOMIC DNA]</scope>
    <source>
        <strain>Bristol N2</strain>
    </source>
</reference>
<reference evidence="9" key="3">
    <citation type="journal article" date="2009" name="J. Biol. Chem.">
        <title>Caenorhabditits elegans LRK-1 and PINK-1 Act Antagonistically in Stress Response and Neurite Outgrowth.</title>
        <authorList>
            <person name="Saemann J."/>
            <person name="Hegermann J."/>
            <person name="von Gromoff E."/>
            <person name="Eimer S."/>
            <person name="Baumeister R."/>
            <person name="Schmidt E."/>
        </authorList>
    </citation>
    <scope>FUNCTION</scope>
    <scope>TISSUE SPECIFICITY</scope>
</reference>
<feature type="chain" id="PRO_0000385373" description="Leucine-rich repeat serine/threonine-protein kinase 1">
    <location>
        <begin position="1"/>
        <end position="2393"/>
    </location>
</feature>
<feature type="repeat" description="ANK 1" evidence="3">
    <location>
        <begin position="56"/>
        <end position="86"/>
    </location>
</feature>
<feature type="repeat" description="ANK 2" evidence="3">
    <location>
        <begin position="90"/>
        <end position="120"/>
    </location>
</feature>
<feature type="repeat" description="ANK 3" evidence="3">
    <location>
        <begin position="123"/>
        <end position="152"/>
    </location>
</feature>
<feature type="repeat" description="ANK 4" evidence="3">
    <location>
        <begin position="197"/>
        <end position="226"/>
    </location>
</feature>
<feature type="repeat" description="ANK 5" evidence="3">
    <location>
        <begin position="230"/>
        <end position="259"/>
    </location>
</feature>
<feature type="repeat" description="ANK 6" evidence="3">
    <location>
        <begin position="264"/>
        <end position="293"/>
    </location>
</feature>
<feature type="repeat" description="ANK 7" evidence="3">
    <location>
        <begin position="317"/>
        <end position="347"/>
    </location>
</feature>
<feature type="repeat" description="ANK 8" evidence="3">
    <location>
        <begin position="361"/>
        <end position="390"/>
    </location>
</feature>
<feature type="repeat" description="ANK 9" evidence="3">
    <location>
        <begin position="407"/>
        <end position="437"/>
    </location>
</feature>
<feature type="repeat" description="ANK 10" evidence="3">
    <location>
        <begin position="439"/>
        <end position="464"/>
    </location>
</feature>
<feature type="repeat" description="LRR 1">
    <location>
        <begin position="532"/>
        <end position="553"/>
    </location>
</feature>
<feature type="repeat" description="LRR 2">
    <location>
        <begin position="555"/>
        <end position="576"/>
    </location>
</feature>
<feature type="repeat" description="LRR 3">
    <location>
        <begin position="580"/>
        <end position="600"/>
    </location>
</feature>
<feature type="repeat" description="LRR 4">
    <location>
        <begin position="604"/>
        <end position="625"/>
    </location>
</feature>
<feature type="repeat" description="LRR 5">
    <location>
        <begin position="627"/>
        <end position="648"/>
    </location>
</feature>
<feature type="repeat" description="LRR 6">
    <location>
        <begin position="718"/>
        <end position="739"/>
    </location>
</feature>
<feature type="repeat" description="LRR 7">
    <location>
        <begin position="742"/>
        <end position="763"/>
    </location>
</feature>
<feature type="repeat" description="LRR 8">
    <location>
        <begin position="765"/>
        <end position="787"/>
    </location>
</feature>
<feature type="repeat" description="LRR 9">
    <location>
        <begin position="856"/>
        <end position="877"/>
    </location>
</feature>
<feature type="repeat" description="LRR 10">
    <location>
        <begin position="883"/>
        <end position="905"/>
    </location>
</feature>
<feature type="repeat" description="LRR 11">
    <location>
        <begin position="906"/>
        <end position="928"/>
    </location>
</feature>
<feature type="repeat" description="LRR 12">
    <location>
        <begin position="930"/>
        <end position="952"/>
    </location>
</feature>
<feature type="domain" description="Roc" evidence="5">
    <location>
        <begin position="969"/>
        <end position="1167"/>
    </location>
</feature>
<feature type="domain" description="COR" evidence="3">
    <location>
        <begin position="1233"/>
        <end position="1422"/>
    </location>
</feature>
<feature type="domain" description="Protein kinase" evidence="4">
    <location>
        <begin position="1694"/>
        <end position="1992"/>
    </location>
</feature>
<feature type="region of interest" description="Disordered" evidence="6">
    <location>
        <begin position="649"/>
        <end position="675"/>
    </location>
</feature>
<feature type="region of interest" description="Disordered" evidence="6">
    <location>
        <begin position="797"/>
        <end position="844"/>
    </location>
</feature>
<feature type="region of interest" description="Disordered" evidence="6">
    <location>
        <begin position="1361"/>
        <end position="1382"/>
    </location>
</feature>
<feature type="region of interest" description="Disordered" evidence="6">
    <location>
        <begin position="1596"/>
        <end position="1633"/>
    </location>
</feature>
<feature type="compositionally biased region" description="Basic residues" evidence="6">
    <location>
        <begin position="804"/>
        <end position="820"/>
    </location>
</feature>
<feature type="compositionally biased region" description="Polar residues" evidence="6">
    <location>
        <begin position="821"/>
        <end position="830"/>
    </location>
</feature>
<feature type="compositionally biased region" description="Basic and acidic residues" evidence="6">
    <location>
        <begin position="835"/>
        <end position="844"/>
    </location>
</feature>
<feature type="compositionally biased region" description="Polar residues" evidence="6">
    <location>
        <begin position="1366"/>
        <end position="1382"/>
    </location>
</feature>
<feature type="compositionally biased region" description="Polar residues" evidence="6">
    <location>
        <begin position="1620"/>
        <end position="1633"/>
    </location>
</feature>
<feature type="active site" description="Proton acceptor" evidence="1 4">
    <location>
        <position position="1847"/>
    </location>
</feature>
<feature type="binding site" evidence="3">
    <location>
        <begin position="982"/>
        <end position="989"/>
    </location>
    <ligand>
        <name>GTP</name>
        <dbReference type="ChEBI" id="CHEBI:37565"/>
    </ligand>
</feature>
<feature type="binding site" evidence="3">
    <location>
        <begin position="1040"/>
        <end position="1044"/>
    </location>
    <ligand>
        <name>GTP</name>
        <dbReference type="ChEBI" id="CHEBI:37565"/>
    </ligand>
</feature>
<feature type="binding site" evidence="3">
    <location>
        <begin position="1098"/>
        <end position="1101"/>
    </location>
    <ligand>
        <name>GTP</name>
        <dbReference type="ChEBI" id="CHEBI:37565"/>
    </ligand>
</feature>
<feature type="binding site" evidence="1 4">
    <location>
        <begin position="1700"/>
        <end position="1708"/>
    </location>
    <ligand>
        <name>ATP</name>
        <dbReference type="ChEBI" id="CHEBI:30616"/>
    </ligand>
</feature>
<feature type="binding site" evidence="2 4">
    <location>
        <position position="1726"/>
    </location>
    <ligand>
        <name>ATP</name>
        <dbReference type="ChEBI" id="CHEBI:30616"/>
    </ligand>
</feature>
<feature type="mutagenesis site" description="Loss of ability to correctly sort SV proteins. No loss of ability to correctly sort SV proteins; when associated with T-1877." evidence="7">
    <original>K</original>
    <variation>A</variation>
    <location>
        <position position="1726"/>
    </location>
</feature>
<feature type="mutagenesis site" description="No loss of ability to correctly sort SV proteins; when associated with A-1726." evidence="7">
    <original>I</original>
    <variation>T</variation>
    <location>
        <position position="1877"/>
    </location>
</feature>
<protein>
    <recommendedName>
        <fullName evidence="2">Leucine-rich repeat serine/threonine-protein kinase 1</fullName>
        <ecNumber>2.7.11.1</ecNumber>
    </recommendedName>
    <alternativeName>
        <fullName>Leucine-rich repeats, ras-like domain, kinase protein 1</fullName>
    </alternativeName>
    <alternativeName>
        <fullName>PARK8-related kinase</fullName>
    </alternativeName>
</protein>
<accession>Q9TZM3</accession>
<accession>A3KFB1</accession>
<organism>
    <name type="scientific">Caenorhabditis elegans</name>
    <dbReference type="NCBI Taxonomy" id="6239"/>
    <lineage>
        <taxon>Eukaryota</taxon>
        <taxon>Metazoa</taxon>
        <taxon>Ecdysozoa</taxon>
        <taxon>Nematoda</taxon>
        <taxon>Chromadorea</taxon>
        <taxon>Rhabditida</taxon>
        <taxon>Rhabditina</taxon>
        <taxon>Rhabditomorpha</taxon>
        <taxon>Rhabditoidea</taxon>
        <taxon>Rhabditidae</taxon>
        <taxon>Peloderinae</taxon>
        <taxon>Caenorhabditis</taxon>
    </lineage>
</organism>